<sequence>MAKKNRLNTTQRKTLRQKEDEYIENLKTKIDEYDPKITKAKFFKDLPISDPTLKGLRESSFIKLTEIQADSIPVSLQGHDVLAAAKTGSGKTLAFLVPVIEKLYREKWTEFDGLGALIISPTRELAMQIYEVLTKIGSHTSFSAGLVIGGKDVKFELERISRINILIGTPGRILQHLDQAVGLNTSNLQMLVLDEADRCLDMGFKKTLDAIVSTLSPSRQTLLFSATQSQSVADLARLSLTDYKTVGTHDVMDGSVNKEASTPETLQQFYIEVPLADKLDILFSFIKSHLKCKMIVFLSSSKQVHFVYETFRKMQPGISLMHLHGRQKQRARTETLDKFNRAQQVCLFATDVVARGIDFPAVDWVVQVDCPEDVDTYIHRVGRCARYGKKGKSLIMLTPQEQEAFLKRLNARKIEPGKLNIKQSKKKSIKPQLQSLLFKDPELKYLGQKAFISYVRSIYVQKDKQVFKFDELPTEEFAYSLGLPGAPKIKMKGMKTIEQAKERKNAPRQLAFLSKANEDGEVIEDKSKQPRTKYDKMFERKNQTILSEHYLNITKAQAQEDEDDDFISVKRKDHEINEAELPALTLPTSRRAQKKALSKKASLASKGNASKLIFDDEGEAHPVYELEDEEEFHKRGDAEVQKTEFLTKESAVMADIDNIDKQVAKEKKQEKKRKRLEAMRREMEAAMEEEISGDEEEGKTVAYLGTGNLSDDMSDGDMPDSEGHLKKKARTVDYSHGHNPSNSVDDDIIEVEEPQTLEDLESLTAKLIQG</sequence>
<protein>
    <recommendedName>
        <fullName>ATP-dependent RNA helicase HCA4</fullName>
        <ecNumber>3.6.4.13</ecNumber>
    </recommendedName>
    <alternativeName>
        <fullName>DEAD box protein 4</fullName>
    </alternativeName>
    <alternativeName>
        <fullName>Helicase CA4</fullName>
    </alternativeName>
    <alternativeName>
        <fullName>Helicase UF1</fullName>
    </alternativeName>
</protein>
<proteinExistence type="evidence at protein level"/>
<keyword id="KW-0067">ATP-binding</keyword>
<keyword id="KW-0347">Helicase</keyword>
<keyword id="KW-0378">Hydrolase</keyword>
<keyword id="KW-0547">Nucleotide-binding</keyword>
<keyword id="KW-0539">Nucleus</keyword>
<keyword id="KW-0597">Phosphoprotein</keyword>
<keyword id="KW-1185">Reference proteome</keyword>
<keyword id="KW-0690">Ribosome biogenesis</keyword>
<keyword id="KW-0694">RNA-binding</keyword>
<keyword id="KW-0698">rRNA processing</keyword>
<feature type="chain" id="PRO_0000055018" description="ATP-dependent RNA helicase HCA4">
    <location>
        <begin position="1"/>
        <end position="770"/>
    </location>
</feature>
<feature type="domain" description="Helicase ATP-binding" evidence="1">
    <location>
        <begin position="72"/>
        <end position="246"/>
    </location>
</feature>
<feature type="domain" description="Helicase C-terminal" evidence="2">
    <location>
        <begin position="278"/>
        <end position="437"/>
    </location>
</feature>
<feature type="region of interest" description="Disordered" evidence="3">
    <location>
        <begin position="705"/>
        <end position="724"/>
    </location>
</feature>
<feature type="short sequence motif" description="Q motif">
    <location>
        <begin position="41"/>
        <end position="69"/>
    </location>
</feature>
<feature type="short sequence motif" description="DEAD box">
    <location>
        <begin position="194"/>
        <end position="197"/>
    </location>
</feature>
<feature type="binding site">
    <location>
        <begin position="85"/>
        <end position="92"/>
    </location>
    <ligand>
        <name>ATP</name>
        <dbReference type="ChEBI" id="CHEBI:30616"/>
    </ligand>
</feature>
<feature type="modified residue" description="Phosphoserine" evidence="11 12">
    <location>
        <position position="692"/>
    </location>
</feature>
<feature type="modified residue" description="Phosphoserine" evidence="13">
    <location>
        <position position="710"/>
    </location>
</feature>
<feature type="modified residue" description="Phosphoserine" evidence="13">
    <location>
        <position position="714"/>
    </location>
</feature>
<feature type="modified residue" description="Phosphoserine" evidence="13">
    <location>
        <position position="743"/>
    </location>
</feature>
<feature type="mutagenesis site" description="Lethal and prevents release of U14 snoRNA from pre-ribosomes." evidence="6">
    <original>K</original>
    <variation>A</variation>
    <variation>R</variation>
    <location>
        <position position="91"/>
    </location>
</feature>
<feature type="mutagenesis site" description="Lethal and prevents release of U14 snoRNA from pre-ribosomes; when associated with A-227." evidence="6">
    <original>S</original>
    <variation>A</variation>
    <location>
        <position position="225"/>
    </location>
</feature>
<feature type="mutagenesis site" description="Lethal and prevents release of U14 snoRNA from pre-ribosomes; when associated with A-225." evidence="6">
    <original>T</original>
    <variation>A</variation>
    <location>
        <position position="227"/>
    </location>
</feature>
<feature type="sequence conflict" description="In Ref. 4; AAT93137." evidence="10" ref="4">
    <original>K</original>
    <variation>R</variation>
    <location>
        <position position="36"/>
    </location>
</feature>
<feature type="sequence conflict" description="In Ref. 5; no nucleotide entry." evidence="10" ref="5">
    <original>V</original>
    <variation>I</variation>
    <location>
        <position position="381"/>
    </location>
</feature>
<feature type="sequence conflict" description="In Ref. 1; AAB17005." evidence="10" ref="1">
    <original>Q</original>
    <variation>E</variation>
    <location>
        <position position="465"/>
    </location>
</feature>
<feature type="sequence conflict" description="In Ref. 1; AAB17005." evidence="10" ref="1">
    <original>F</original>
    <variation>L</variation>
    <location>
        <position position="512"/>
    </location>
</feature>
<feature type="sequence conflict" description="In Ref. 1; AAB17005." evidence="10" ref="1">
    <original>KQEKKR</original>
    <variation>NKRRRG</variation>
    <location>
        <begin position="668"/>
        <end position="673"/>
    </location>
</feature>
<feature type="sequence conflict" description="In Ref. 1; AAB17005." evidence="10" ref="1">
    <original>R</original>
    <variation>D</variation>
    <location>
        <position position="675"/>
    </location>
</feature>
<comment type="function">
    <text evidence="6 7 8 9">ATP-dependent RNA helicase required for ribosome biogenesis. Involved in the release of U14 snoRNA in pre-ribosomal complexes. Required for pre-rRNA cleavage at site A2.</text>
</comment>
<comment type="catalytic activity">
    <reaction>
        <text>ATP + H2O = ADP + phosphate + H(+)</text>
        <dbReference type="Rhea" id="RHEA:13065"/>
        <dbReference type="ChEBI" id="CHEBI:15377"/>
        <dbReference type="ChEBI" id="CHEBI:15378"/>
        <dbReference type="ChEBI" id="CHEBI:30616"/>
        <dbReference type="ChEBI" id="CHEBI:43474"/>
        <dbReference type="ChEBI" id="CHEBI:456216"/>
        <dbReference type="EC" id="3.6.4.13"/>
    </reaction>
</comment>
<comment type="biophysicochemical properties">
    <kinetics>
        <KM evidence="8">0.24 mM for ATP</KM>
    </kinetics>
</comment>
<comment type="subunit">
    <text evidence="6">Interacts with the U3 and U14 snoRNAs. Associates with pre-ribosomal complexes.</text>
</comment>
<comment type="interaction">
    <interactant intactId="EBI-5612">
        <id>P20448</id>
    </interactant>
    <interactant intactId="EBI-36432">
        <id>Q06631</id>
        <label>BFR2</label>
    </interactant>
    <organismsDiffer>false</organismsDiffer>
    <experiments>6</experiments>
</comment>
<comment type="interaction">
    <interactant intactId="EBI-5612">
        <id>P20448</id>
    </interactant>
    <interactant intactId="EBI-9533">
        <id>P15790</id>
        <label>CKA1</label>
    </interactant>
    <organismsDiffer>false</organismsDiffer>
    <experiments>2</experiments>
</comment>
<comment type="interaction">
    <interactant intactId="EBI-5612">
        <id>P20448</id>
    </interactant>
    <interactant intactId="EBI-23354">
        <id>P48234</id>
        <label>ENP2</label>
    </interactant>
    <organismsDiffer>false</organismsDiffer>
    <experiments>4</experiments>
</comment>
<comment type="interaction">
    <interactant intactId="EBI-5612">
        <id>P20448</id>
    </interactant>
    <interactant intactId="EBI-34121">
        <id>Q06344</id>
        <label>ESF1</label>
    </interactant>
    <organismsDiffer>false</organismsDiffer>
    <experiments>4</experiments>
</comment>
<comment type="interaction">
    <interactant intactId="EBI-5612">
        <id>P20448</id>
    </interactant>
    <interactant intactId="EBI-28537">
        <id>P53743</id>
        <label>ESF2</label>
    </interactant>
    <organismsDiffer>false</organismsDiffer>
    <experiments>3</experiments>
</comment>
<comment type="interaction">
    <interactant intactId="EBI-5612">
        <id>P20448</id>
    </interactant>
    <interactant intactId="EBI-8170">
        <id>Q03532</id>
        <label>HAS1</label>
    </interactant>
    <organismsDiffer>false</organismsDiffer>
    <experiments>3</experiments>
</comment>
<comment type="interaction">
    <interactant intactId="EBI-5612">
        <id>P20448</id>
    </interactant>
    <interactant intactId="EBI-5612">
        <id>P20448</id>
        <label>HCA4</label>
    </interactant>
    <organismsDiffer>false</organismsDiffer>
    <experiments>2</experiments>
</comment>
<comment type="interaction">
    <interactant intactId="EBI-5612">
        <id>P20448</id>
    </interactant>
    <interactant intactId="EBI-31770">
        <id>Q12481</id>
        <label>RRP36</label>
    </interactant>
    <organismsDiffer>false</organismsDiffer>
    <experiments>3</experiments>
</comment>
<comment type="interaction">
    <interactant intactId="EBI-5612">
        <id>P20448</id>
    </interactant>
    <interactant intactId="EBI-36084">
        <id>Q12136</id>
        <label>SAS10</label>
    </interactant>
    <organismsDiffer>false</organismsDiffer>
    <experiments>4</experiments>
</comment>
<comment type="interaction">
    <interactant intactId="EBI-5612">
        <id>P20448</id>
    </interactant>
    <interactant intactId="EBI-4534">
        <id>P40362</id>
        <label>UTP18</label>
    </interactant>
    <organismsDiffer>false</organismsDiffer>
    <experiments>3</experiments>
</comment>
<comment type="interaction">
    <interactant intactId="EBI-5612">
        <id>P20448</id>
    </interactant>
    <interactant intactId="EBI-1878">
        <id>P53254</id>
        <label>UTP22</label>
    </interactant>
    <organismsDiffer>false</organismsDiffer>
    <experiments>4</experiments>
</comment>
<comment type="subcellular location">
    <subcellularLocation>
        <location evidence="4">Nucleus</location>
        <location evidence="4">Nucleolus</location>
    </subcellularLocation>
</comment>
<comment type="domain">
    <text>The Q motif is unique to and characteristic of the DEAD box family of RNA helicases and controls ATP binding and hydrolysis.</text>
</comment>
<comment type="miscellaneous">
    <text evidence="5">Present with 7900 molecules/cell in log phase SD medium.</text>
</comment>
<comment type="similarity">
    <text evidence="10">Belongs to the DEAD box helicase family. DDX10/DBP4 subfamily.</text>
</comment>
<reference key="1">
    <citation type="journal article" date="1997" name="Mol. Cell. Biol.">
        <title>The rRNA-processing function of the yeast U14 small nucleolar RNA can be rescued by a conserved RNA helicase-like protein.</title>
        <authorList>
            <person name="Liang W.-Q."/>
            <person name="Clark J.A."/>
            <person name="Fournier M.J."/>
        </authorList>
    </citation>
    <scope>NUCLEOTIDE SEQUENCE [GENOMIC DNA]</scope>
    <scope>FUNCTION</scope>
</reference>
<reference key="2">
    <citation type="journal article" date="1996" name="EMBO J.">
        <title>Complete nucleotide sequence of Saccharomyces cerevisiae chromosome X.</title>
        <authorList>
            <person name="Galibert F."/>
            <person name="Alexandraki D."/>
            <person name="Baur A."/>
            <person name="Boles E."/>
            <person name="Chalwatzis N."/>
            <person name="Chuat J.-C."/>
            <person name="Coster F."/>
            <person name="Cziepluch C."/>
            <person name="de Haan M."/>
            <person name="Domdey H."/>
            <person name="Durand P."/>
            <person name="Entian K.-D."/>
            <person name="Gatius M."/>
            <person name="Goffeau A."/>
            <person name="Grivell L.A."/>
            <person name="Hennemann A."/>
            <person name="Herbert C.J."/>
            <person name="Heumann K."/>
            <person name="Hilger F."/>
            <person name="Hollenberg C.P."/>
            <person name="Huang M.-E."/>
            <person name="Jacq C."/>
            <person name="Jauniaux J.-C."/>
            <person name="Katsoulou C."/>
            <person name="Kirchrath L."/>
            <person name="Kleine K."/>
            <person name="Kordes E."/>
            <person name="Koetter P."/>
            <person name="Liebl S."/>
            <person name="Louis E.J."/>
            <person name="Manus V."/>
            <person name="Mewes H.-W."/>
            <person name="Miosga T."/>
            <person name="Obermaier B."/>
            <person name="Perea J."/>
            <person name="Pohl T.M."/>
            <person name="Portetelle D."/>
            <person name="Pujol A."/>
            <person name="Purnelle B."/>
            <person name="Ramezani Rad M."/>
            <person name="Rasmussen S.W."/>
            <person name="Rose M."/>
            <person name="Rossau R."/>
            <person name="Schaaff-Gerstenschlaeger I."/>
            <person name="Smits P.H.M."/>
            <person name="Scarcez T."/>
            <person name="Soriano N."/>
            <person name="To Van D."/>
            <person name="Tzermia M."/>
            <person name="Van Broekhoven A."/>
            <person name="Vandenbol M."/>
            <person name="Wedler H."/>
            <person name="von Wettstein D."/>
            <person name="Wambutt R."/>
            <person name="Zagulski M."/>
            <person name="Zollner A."/>
            <person name="Karpfinger-Hartl L."/>
        </authorList>
    </citation>
    <scope>NUCLEOTIDE SEQUENCE [LARGE SCALE GENOMIC DNA]</scope>
    <source>
        <strain>ATCC 204508 / S288c</strain>
    </source>
</reference>
<reference key="3">
    <citation type="journal article" date="2014" name="G3 (Bethesda)">
        <title>The reference genome sequence of Saccharomyces cerevisiae: Then and now.</title>
        <authorList>
            <person name="Engel S.R."/>
            <person name="Dietrich F.S."/>
            <person name="Fisk D.G."/>
            <person name="Binkley G."/>
            <person name="Balakrishnan R."/>
            <person name="Costanzo M.C."/>
            <person name="Dwight S.S."/>
            <person name="Hitz B.C."/>
            <person name="Karra K."/>
            <person name="Nash R.S."/>
            <person name="Weng S."/>
            <person name="Wong E.D."/>
            <person name="Lloyd P."/>
            <person name="Skrzypek M.S."/>
            <person name="Miyasato S.R."/>
            <person name="Simison M."/>
            <person name="Cherry J.M."/>
        </authorList>
    </citation>
    <scope>GENOME REANNOTATION</scope>
    <source>
        <strain>ATCC 204508 / S288c</strain>
    </source>
</reference>
<reference key="4">
    <citation type="journal article" date="2007" name="Genome Res.">
        <title>Approaching a complete repository of sequence-verified protein-encoding clones for Saccharomyces cerevisiae.</title>
        <authorList>
            <person name="Hu Y."/>
            <person name="Rolfs A."/>
            <person name="Bhullar B."/>
            <person name="Murthy T.V.S."/>
            <person name="Zhu C."/>
            <person name="Berger M.F."/>
            <person name="Camargo A.A."/>
            <person name="Kelley F."/>
            <person name="McCarron S."/>
            <person name="Jepson D."/>
            <person name="Richardson A."/>
            <person name="Raphael J."/>
            <person name="Moreira D."/>
            <person name="Taycher E."/>
            <person name="Zuo D."/>
            <person name="Mohr S."/>
            <person name="Kane M.F."/>
            <person name="Williamson J."/>
            <person name="Simpson A.J.G."/>
            <person name="Bulyk M.L."/>
            <person name="Harlow E."/>
            <person name="Marsischky G."/>
            <person name="Kolodner R.D."/>
            <person name="LaBaer J."/>
        </authorList>
    </citation>
    <scope>NUCLEOTIDE SEQUENCE [GENOMIC DNA]</scope>
    <source>
        <strain>ATCC 204508 / S288c</strain>
    </source>
</reference>
<reference key="5">
    <citation type="journal article" date="1990" name="Proc. Natl. Acad. Sci. U.S.A.">
        <title>Identification of five putative yeast RNA helicase genes.</title>
        <authorList>
            <person name="Chang T.-H."/>
            <person name="Arenas J."/>
            <person name="Abelson J."/>
        </authorList>
    </citation>
    <scope>NUCLEOTIDE SEQUENCE [GENOMIC DNA] OF 192-382</scope>
</reference>
<reference key="6">
    <citation type="journal article" date="2003" name="Mol. Cell">
        <title>Assigning function to yeast proteins by integration of technologies.</title>
        <authorList>
            <person name="Hazbun T.R."/>
            <person name="Malmstroem L."/>
            <person name="Anderson S."/>
            <person name="Graczyk B.J."/>
            <person name="Fox B."/>
            <person name="Riffle M."/>
            <person name="Sundin B.A."/>
            <person name="Aranda J.D."/>
            <person name="McDonald W.H."/>
            <person name="Chiu C.-H."/>
            <person name="Snydsman B.E."/>
            <person name="Bradley P."/>
            <person name="Muller E.G.D."/>
            <person name="Fields S."/>
            <person name="Baker D."/>
            <person name="Yates J.R. III"/>
            <person name="Davis T.N."/>
        </authorList>
    </citation>
    <scope>IDENTIFICATION BY MASS SPECTROMETRY</scope>
</reference>
<reference key="7">
    <citation type="journal article" date="2003" name="Nature">
        <title>Global analysis of protein localization in budding yeast.</title>
        <authorList>
            <person name="Huh W.-K."/>
            <person name="Falvo J.V."/>
            <person name="Gerke L.C."/>
            <person name="Carroll A.S."/>
            <person name="Howson R.W."/>
            <person name="Weissman J.S."/>
            <person name="O'Shea E.K."/>
        </authorList>
    </citation>
    <scope>SUBCELLULAR LOCATION [LARGE SCALE ANALYSIS]</scope>
</reference>
<reference key="8">
    <citation type="journal article" date="2003" name="Nature">
        <title>Global analysis of protein expression in yeast.</title>
        <authorList>
            <person name="Ghaemmaghami S."/>
            <person name="Huh W.-K."/>
            <person name="Bower K."/>
            <person name="Howson R.W."/>
            <person name="Belle A."/>
            <person name="Dephoure N."/>
            <person name="O'Shea E.K."/>
            <person name="Weissman J.S."/>
        </authorList>
    </citation>
    <scope>LEVEL OF PROTEIN EXPRESSION [LARGE SCALE ANALYSIS]</scope>
</reference>
<reference key="9">
    <citation type="journal article" date="2005" name="Mol. Cell">
        <title>The putative RNA helicase Dbp4p is required for release of the U14 snoRNA from preribosomes in Saccharomyces cerevisiae.</title>
        <authorList>
            <person name="Kos M."/>
            <person name="Tollervey D."/>
        </authorList>
    </citation>
    <scope>FUNCTION</scope>
    <scope>INTERACTION WITH THE U3 AND U14 SNORNAS</scope>
    <scope>ASSOCIATION WITH THE PRE-RIBOSOMAL COMPLEX</scope>
    <scope>MUTAGENESIS OF LYS-91; SER-225 AND THR-227</scope>
</reference>
<reference key="10">
    <citation type="journal article" date="2007" name="J. Proteome Res.">
        <title>Large-scale phosphorylation analysis of alpha-factor-arrested Saccharomyces cerevisiae.</title>
        <authorList>
            <person name="Li X."/>
            <person name="Gerber S.A."/>
            <person name="Rudner A.D."/>
            <person name="Beausoleil S.A."/>
            <person name="Haas W."/>
            <person name="Villen J."/>
            <person name="Elias J.E."/>
            <person name="Gygi S.P."/>
        </authorList>
    </citation>
    <scope>PHOSPHORYLATION [LARGE SCALE ANALYSIS] AT SER-692</scope>
    <scope>IDENTIFICATION BY MASS SPECTROMETRY [LARGE SCALE ANALYSIS]</scope>
    <source>
        <strain>ADR376</strain>
    </source>
</reference>
<reference key="11">
    <citation type="journal article" date="2008" name="Biochemistry">
        <title>Differential RNA-dependent ATPase activities of four rRNA processing yeast DEAD-box proteins.</title>
        <authorList>
            <person name="Garcia I."/>
            <person name="Uhlenbeck O.C."/>
        </authorList>
    </citation>
    <scope>FUNCTION</scope>
    <scope>RNA-BINDING</scope>
    <scope>BIOPHYSICOCHEMICAL PROPERTIES</scope>
</reference>
<reference key="12">
    <citation type="journal article" date="2008" name="EMBO Rep.">
        <title>Quantitative analysis of snoRNA association with pre-ribosomes and release of snR30 by Rok1 helicase.</title>
        <authorList>
            <person name="Bohnsack M.T."/>
            <person name="Kos M."/>
            <person name="Tollervey D."/>
        </authorList>
    </citation>
    <scope>FUNCTION</scope>
</reference>
<reference key="13">
    <citation type="journal article" date="2008" name="Mol. Cell. Proteomics">
        <title>A multidimensional chromatography technology for in-depth phosphoproteome analysis.</title>
        <authorList>
            <person name="Albuquerque C.P."/>
            <person name="Smolka M.B."/>
            <person name="Payne S.H."/>
            <person name="Bafna V."/>
            <person name="Eng J."/>
            <person name="Zhou H."/>
        </authorList>
    </citation>
    <scope>PHOSPHORYLATION [LARGE SCALE ANALYSIS] AT SER-692</scope>
    <scope>IDENTIFICATION BY MASS SPECTROMETRY [LARGE SCALE ANALYSIS]</scope>
</reference>
<reference key="14">
    <citation type="journal article" date="2009" name="Science">
        <title>Global analysis of Cdk1 substrate phosphorylation sites provides insights into evolution.</title>
        <authorList>
            <person name="Holt L.J."/>
            <person name="Tuch B.B."/>
            <person name="Villen J."/>
            <person name="Johnson A.D."/>
            <person name="Gygi S.P."/>
            <person name="Morgan D.O."/>
        </authorList>
    </citation>
    <scope>PHOSPHORYLATION [LARGE SCALE ANALYSIS] AT SER-710; SER-714 AND SER-743</scope>
    <scope>IDENTIFICATION BY MASS SPECTROMETRY [LARGE SCALE ANALYSIS]</scope>
</reference>
<dbReference type="EC" id="3.6.4.13"/>
<dbReference type="EMBL" id="U72149">
    <property type="protein sequence ID" value="AAB17005.1"/>
    <property type="molecule type" value="Genomic_DNA"/>
</dbReference>
<dbReference type="EMBL" id="Z49308">
    <property type="protein sequence ID" value="CAA89324.1"/>
    <property type="molecule type" value="Genomic_DNA"/>
</dbReference>
<dbReference type="EMBL" id="AY693118">
    <property type="protein sequence ID" value="AAT93137.1"/>
    <property type="molecule type" value="Genomic_DNA"/>
</dbReference>
<dbReference type="EMBL" id="BK006943">
    <property type="protein sequence ID" value="DAA08766.1"/>
    <property type="molecule type" value="Genomic_DNA"/>
</dbReference>
<dbReference type="PIR" id="S56805">
    <property type="entry name" value="S56805"/>
</dbReference>
<dbReference type="RefSeq" id="NP_012501.1">
    <property type="nucleotide sequence ID" value="NM_001181467.1"/>
</dbReference>
<dbReference type="SMR" id="P20448"/>
<dbReference type="BioGRID" id="33727">
    <property type="interactions" value="266"/>
</dbReference>
<dbReference type="DIP" id="DIP-6819N"/>
<dbReference type="FunCoup" id="P20448">
    <property type="interactions" value="1263"/>
</dbReference>
<dbReference type="IntAct" id="P20448">
    <property type="interactions" value="95"/>
</dbReference>
<dbReference type="MINT" id="P20448"/>
<dbReference type="STRING" id="4932.YJL033W"/>
<dbReference type="iPTMnet" id="P20448"/>
<dbReference type="PaxDb" id="4932-YJL033W"/>
<dbReference type="PeptideAtlas" id="P20448"/>
<dbReference type="EnsemblFungi" id="YJL033W_mRNA">
    <property type="protein sequence ID" value="YJL033W"/>
    <property type="gene ID" value="YJL033W"/>
</dbReference>
<dbReference type="GeneID" id="853419"/>
<dbReference type="KEGG" id="sce:YJL033W"/>
<dbReference type="AGR" id="SGD:S000003570"/>
<dbReference type="SGD" id="S000003570">
    <property type="gene designation" value="HCA4"/>
</dbReference>
<dbReference type="VEuPathDB" id="FungiDB:YJL033W"/>
<dbReference type="eggNOG" id="KOG0343">
    <property type="taxonomic scope" value="Eukaryota"/>
</dbReference>
<dbReference type="GeneTree" id="ENSGT00550000074980"/>
<dbReference type="HOGENOM" id="CLU_003041_26_1_1"/>
<dbReference type="InParanoid" id="P20448"/>
<dbReference type="OMA" id="YDKMFER"/>
<dbReference type="OrthoDB" id="10259640at2759"/>
<dbReference type="BioCyc" id="YEAST:G3O-31500-MONOMER"/>
<dbReference type="SABIO-RK" id="P20448"/>
<dbReference type="BioGRID-ORCS" id="853419">
    <property type="hits" value="8 hits in 10 CRISPR screens"/>
</dbReference>
<dbReference type="CD-CODE" id="BDAE0F88">
    <property type="entry name" value="Nucleolus"/>
</dbReference>
<dbReference type="CD-CODE" id="E03F929F">
    <property type="entry name" value="Stress granule"/>
</dbReference>
<dbReference type="PRO" id="PR:P20448"/>
<dbReference type="Proteomes" id="UP000002311">
    <property type="component" value="Chromosome X"/>
</dbReference>
<dbReference type="RNAct" id="P20448">
    <property type="molecule type" value="protein"/>
</dbReference>
<dbReference type="GO" id="GO:0005730">
    <property type="term" value="C:nucleolus"/>
    <property type="evidence" value="ECO:0000314"/>
    <property type="project" value="ComplexPortal"/>
</dbReference>
<dbReference type="GO" id="GO:0005634">
    <property type="term" value="C:nucleus"/>
    <property type="evidence" value="ECO:0000318"/>
    <property type="project" value="GO_Central"/>
</dbReference>
<dbReference type="GO" id="GO:0032040">
    <property type="term" value="C:small-subunit processome"/>
    <property type="evidence" value="ECO:0000315"/>
    <property type="project" value="SGD"/>
</dbReference>
<dbReference type="GO" id="GO:0005524">
    <property type="term" value="F:ATP binding"/>
    <property type="evidence" value="ECO:0007669"/>
    <property type="project" value="UniProtKB-KW"/>
</dbReference>
<dbReference type="GO" id="GO:0016887">
    <property type="term" value="F:ATP hydrolysis activity"/>
    <property type="evidence" value="ECO:0007669"/>
    <property type="project" value="RHEA"/>
</dbReference>
<dbReference type="GO" id="GO:0008186">
    <property type="term" value="F:ATP-dependent activity, acting on RNA"/>
    <property type="evidence" value="ECO:0000314"/>
    <property type="project" value="SGD"/>
</dbReference>
<dbReference type="GO" id="GO:0042802">
    <property type="term" value="F:identical protein binding"/>
    <property type="evidence" value="ECO:0000353"/>
    <property type="project" value="IntAct"/>
</dbReference>
<dbReference type="GO" id="GO:0003723">
    <property type="term" value="F:RNA binding"/>
    <property type="evidence" value="ECO:0007669"/>
    <property type="project" value="UniProtKB-KW"/>
</dbReference>
<dbReference type="GO" id="GO:0003724">
    <property type="term" value="F:RNA helicase activity"/>
    <property type="evidence" value="ECO:0000314"/>
    <property type="project" value="SGD"/>
</dbReference>
<dbReference type="GO" id="GO:0030490">
    <property type="term" value="P:maturation of SSU-rRNA"/>
    <property type="evidence" value="ECO:0000303"/>
    <property type="project" value="ComplexPortal"/>
</dbReference>
<dbReference type="GO" id="GO:0006364">
    <property type="term" value="P:rRNA processing"/>
    <property type="evidence" value="ECO:0000315"/>
    <property type="project" value="SGD"/>
</dbReference>
<dbReference type="CDD" id="cd17941">
    <property type="entry name" value="DEADc_DDX10"/>
    <property type="match status" value="1"/>
</dbReference>
<dbReference type="CDD" id="cd18787">
    <property type="entry name" value="SF2_C_DEAD"/>
    <property type="match status" value="1"/>
</dbReference>
<dbReference type="FunFam" id="3.40.50.300:FF:000874">
    <property type="entry name" value="RNA helicase"/>
    <property type="match status" value="1"/>
</dbReference>
<dbReference type="FunFam" id="3.40.50.300:FF:001632">
    <property type="entry name" value="RNA helicase"/>
    <property type="match status" value="1"/>
</dbReference>
<dbReference type="Gene3D" id="3.40.50.300">
    <property type="entry name" value="P-loop containing nucleotide triphosphate hydrolases"/>
    <property type="match status" value="2"/>
</dbReference>
<dbReference type="InterPro" id="IPR011545">
    <property type="entry name" value="DEAD/DEAH_box_helicase_dom"/>
</dbReference>
<dbReference type="InterPro" id="IPR014001">
    <property type="entry name" value="Helicase_ATP-bd"/>
</dbReference>
<dbReference type="InterPro" id="IPR001650">
    <property type="entry name" value="Helicase_C-like"/>
</dbReference>
<dbReference type="InterPro" id="IPR027417">
    <property type="entry name" value="P-loop_NTPase"/>
</dbReference>
<dbReference type="InterPro" id="IPR000629">
    <property type="entry name" value="RNA-helicase_DEAD-box_CS"/>
</dbReference>
<dbReference type="InterPro" id="IPR014014">
    <property type="entry name" value="RNA_helicase_DEAD_Q_motif"/>
</dbReference>
<dbReference type="InterPro" id="IPR025313">
    <property type="entry name" value="SPB4-like_CTE"/>
</dbReference>
<dbReference type="PANTHER" id="PTHR24031">
    <property type="entry name" value="RNA HELICASE"/>
    <property type="match status" value="1"/>
</dbReference>
<dbReference type="Pfam" id="PF13959">
    <property type="entry name" value="CTE_SPB4"/>
    <property type="match status" value="1"/>
</dbReference>
<dbReference type="Pfam" id="PF00270">
    <property type="entry name" value="DEAD"/>
    <property type="match status" value="1"/>
</dbReference>
<dbReference type="Pfam" id="PF00271">
    <property type="entry name" value="Helicase_C"/>
    <property type="match status" value="1"/>
</dbReference>
<dbReference type="SMART" id="SM00487">
    <property type="entry name" value="DEXDc"/>
    <property type="match status" value="1"/>
</dbReference>
<dbReference type="SMART" id="SM01178">
    <property type="entry name" value="DUF4217"/>
    <property type="match status" value="1"/>
</dbReference>
<dbReference type="SMART" id="SM00490">
    <property type="entry name" value="HELICc"/>
    <property type="match status" value="1"/>
</dbReference>
<dbReference type="SUPFAM" id="SSF52540">
    <property type="entry name" value="P-loop containing nucleoside triphosphate hydrolases"/>
    <property type="match status" value="1"/>
</dbReference>
<dbReference type="PROSITE" id="PS00039">
    <property type="entry name" value="DEAD_ATP_HELICASE"/>
    <property type="match status" value="1"/>
</dbReference>
<dbReference type="PROSITE" id="PS51192">
    <property type="entry name" value="HELICASE_ATP_BIND_1"/>
    <property type="match status" value="1"/>
</dbReference>
<dbReference type="PROSITE" id="PS51194">
    <property type="entry name" value="HELICASE_CTER"/>
    <property type="match status" value="1"/>
</dbReference>
<dbReference type="PROSITE" id="PS51195">
    <property type="entry name" value="Q_MOTIF"/>
    <property type="match status" value="1"/>
</dbReference>
<organism>
    <name type="scientific">Saccharomyces cerevisiae (strain ATCC 204508 / S288c)</name>
    <name type="common">Baker's yeast</name>
    <dbReference type="NCBI Taxonomy" id="559292"/>
    <lineage>
        <taxon>Eukaryota</taxon>
        <taxon>Fungi</taxon>
        <taxon>Dikarya</taxon>
        <taxon>Ascomycota</taxon>
        <taxon>Saccharomycotina</taxon>
        <taxon>Saccharomycetes</taxon>
        <taxon>Saccharomycetales</taxon>
        <taxon>Saccharomycetaceae</taxon>
        <taxon>Saccharomyces</taxon>
    </lineage>
</organism>
<name>DBP4_YEAST</name>
<evidence type="ECO:0000255" key="1">
    <source>
        <dbReference type="PROSITE-ProRule" id="PRU00541"/>
    </source>
</evidence>
<evidence type="ECO:0000255" key="2">
    <source>
        <dbReference type="PROSITE-ProRule" id="PRU00542"/>
    </source>
</evidence>
<evidence type="ECO:0000256" key="3">
    <source>
        <dbReference type="SAM" id="MobiDB-lite"/>
    </source>
</evidence>
<evidence type="ECO:0000269" key="4">
    <source>
    </source>
</evidence>
<evidence type="ECO:0000269" key="5">
    <source>
    </source>
</evidence>
<evidence type="ECO:0000269" key="6">
    <source>
    </source>
</evidence>
<evidence type="ECO:0000269" key="7">
    <source>
    </source>
</evidence>
<evidence type="ECO:0000269" key="8">
    <source>
    </source>
</evidence>
<evidence type="ECO:0000269" key="9">
    <source>
    </source>
</evidence>
<evidence type="ECO:0000305" key="10"/>
<evidence type="ECO:0007744" key="11">
    <source>
    </source>
</evidence>
<evidence type="ECO:0007744" key="12">
    <source>
    </source>
</evidence>
<evidence type="ECO:0007744" key="13">
    <source>
    </source>
</evidence>
<accession>P20448</accession>
<accession>D6VWF0</accession>
<accession>Q6B1G2</accession>
<accession>Q92329</accession>
<gene>
    <name type="primary">HCA4</name>
    <name type="synonym">DBP4</name>
    <name type="synonym">ECM24</name>
    <name type="ordered locus">YJL033W</name>
    <name type="ORF">J1250</name>
</gene>